<dbReference type="EMBL" id="AC011506">
    <property type="status" value="NOT_ANNOTATED_CDS"/>
    <property type="molecule type" value="Genomic_DNA"/>
</dbReference>
<dbReference type="SMR" id="P0CG00"/>
<dbReference type="iPTMnet" id="P0CG00"/>
<dbReference type="PhosphoSitePlus" id="P0CG00"/>
<dbReference type="BioMuta" id="HGNC:37706"/>
<dbReference type="DMDM" id="296439806"/>
<dbReference type="jPOST" id="P0CG00"/>
<dbReference type="MassIVE" id="P0CG00"/>
<dbReference type="PaxDb" id="9606-ENSP00000470691"/>
<dbReference type="PeptideAtlas" id="P0CG00"/>
<dbReference type="UCSC" id="uc061del.1">
    <property type="organism name" value="human"/>
</dbReference>
<dbReference type="AGR" id="HGNC:37706"/>
<dbReference type="GeneCards" id="ZSCAN5DP"/>
<dbReference type="HGNC" id="HGNC:37706">
    <property type="gene designation" value="ZSCAN5DP"/>
</dbReference>
<dbReference type="neXtProt" id="NX_P0CG00"/>
<dbReference type="eggNOG" id="KOG1721">
    <property type="taxonomic scope" value="Eukaryota"/>
</dbReference>
<dbReference type="InParanoid" id="P0CG00"/>
<dbReference type="PAN-GO" id="P0CG00">
    <property type="GO annotations" value="3 GO annotations based on evolutionary models"/>
</dbReference>
<dbReference type="PhylomeDB" id="P0CG00"/>
<dbReference type="PathwayCommons" id="P0CG00"/>
<dbReference type="Pharos" id="P0CG00">
    <property type="development level" value="Tdark"/>
</dbReference>
<dbReference type="Proteomes" id="UP000005640">
    <property type="component" value="Unplaced"/>
</dbReference>
<dbReference type="RNAct" id="P0CG00">
    <property type="molecule type" value="protein"/>
</dbReference>
<dbReference type="GO" id="GO:0005634">
    <property type="term" value="C:nucleus"/>
    <property type="evidence" value="ECO:0007669"/>
    <property type="project" value="UniProtKB-SubCell"/>
</dbReference>
<dbReference type="GO" id="GO:0000981">
    <property type="term" value="F:DNA-binding transcription factor activity, RNA polymerase II-specific"/>
    <property type="evidence" value="ECO:0000318"/>
    <property type="project" value="GO_Central"/>
</dbReference>
<dbReference type="GO" id="GO:0000978">
    <property type="term" value="F:RNA polymerase II cis-regulatory region sequence-specific DNA binding"/>
    <property type="evidence" value="ECO:0000318"/>
    <property type="project" value="GO_Central"/>
</dbReference>
<dbReference type="GO" id="GO:0008270">
    <property type="term" value="F:zinc ion binding"/>
    <property type="evidence" value="ECO:0007669"/>
    <property type="project" value="UniProtKB-KW"/>
</dbReference>
<dbReference type="GO" id="GO:0006357">
    <property type="term" value="P:regulation of transcription by RNA polymerase II"/>
    <property type="evidence" value="ECO:0000318"/>
    <property type="project" value="GO_Central"/>
</dbReference>
<dbReference type="CDD" id="cd07936">
    <property type="entry name" value="SCAN"/>
    <property type="match status" value="1"/>
</dbReference>
<dbReference type="FunFam" id="3.30.160.60:FF:001690">
    <property type="entry name" value="Zinc finger and SCAN domain containing 5A"/>
    <property type="match status" value="1"/>
</dbReference>
<dbReference type="FunFam" id="3.30.160.60:FF:001718">
    <property type="entry name" value="Zinc finger and SCAN domain containing 5A"/>
    <property type="match status" value="1"/>
</dbReference>
<dbReference type="FunFam" id="3.30.160.60:FF:000358">
    <property type="entry name" value="zinc finger protein 24"/>
    <property type="match status" value="1"/>
</dbReference>
<dbReference type="FunFam" id="3.30.160.60:FF:002343">
    <property type="entry name" value="Zinc finger protein 33A"/>
    <property type="match status" value="1"/>
</dbReference>
<dbReference type="FunFam" id="3.30.160.60:FF:000145">
    <property type="entry name" value="Zinc finger protein 574"/>
    <property type="match status" value="1"/>
</dbReference>
<dbReference type="Gene3D" id="3.30.160.60">
    <property type="entry name" value="Classic Zinc Finger"/>
    <property type="match status" value="5"/>
</dbReference>
<dbReference type="Gene3D" id="1.10.4020.10">
    <property type="entry name" value="DNA breaking-rejoining enzymes"/>
    <property type="match status" value="1"/>
</dbReference>
<dbReference type="InterPro" id="IPR003309">
    <property type="entry name" value="SCAN_dom"/>
</dbReference>
<dbReference type="InterPro" id="IPR038269">
    <property type="entry name" value="SCAN_sf"/>
</dbReference>
<dbReference type="InterPro" id="IPR050331">
    <property type="entry name" value="Zinc_finger"/>
</dbReference>
<dbReference type="InterPro" id="IPR036236">
    <property type="entry name" value="Znf_C2H2_sf"/>
</dbReference>
<dbReference type="InterPro" id="IPR013087">
    <property type="entry name" value="Znf_C2H2_type"/>
</dbReference>
<dbReference type="PANTHER" id="PTHR16515:SF49">
    <property type="entry name" value="GASTRULA ZINC FINGER PROTEIN XLCGF49.1-LIKE-RELATED"/>
    <property type="match status" value="1"/>
</dbReference>
<dbReference type="PANTHER" id="PTHR16515">
    <property type="entry name" value="PR DOMAIN ZINC FINGER PROTEIN"/>
    <property type="match status" value="1"/>
</dbReference>
<dbReference type="Pfam" id="PF02023">
    <property type="entry name" value="SCAN"/>
    <property type="match status" value="1"/>
</dbReference>
<dbReference type="Pfam" id="PF00096">
    <property type="entry name" value="zf-C2H2"/>
    <property type="match status" value="4"/>
</dbReference>
<dbReference type="Pfam" id="PF12874">
    <property type="entry name" value="zf-met"/>
    <property type="match status" value="1"/>
</dbReference>
<dbReference type="SMART" id="SM00431">
    <property type="entry name" value="SCAN"/>
    <property type="match status" value="1"/>
</dbReference>
<dbReference type="SMART" id="SM00355">
    <property type="entry name" value="ZnF_C2H2"/>
    <property type="match status" value="5"/>
</dbReference>
<dbReference type="SUPFAM" id="SSF57667">
    <property type="entry name" value="beta-beta-alpha zinc fingers"/>
    <property type="match status" value="3"/>
</dbReference>
<dbReference type="SUPFAM" id="SSF47353">
    <property type="entry name" value="Retrovirus capsid dimerization domain-like"/>
    <property type="match status" value="1"/>
</dbReference>
<dbReference type="PROSITE" id="PS50804">
    <property type="entry name" value="SCAN_BOX"/>
    <property type="match status" value="1"/>
</dbReference>
<dbReference type="PROSITE" id="PS00028">
    <property type="entry name" value="ZINC_FINGER_C2H2_1"/>
    <property type="match status" value="5"/>
</dbReference>
<dbReference type="PROSITE" id="PS50157">
    <property type="entry name" value="ZINC_FINGER_C2H2_2"/>
    <property type="match status" value="5"/>
</dbReference>
<protein>
    <recommendedName>
        <fullName evidence="5">Putative zinc finger and SCAN domain-containing protein 5D</fullName>
    </recommendedName>
    <alternativeName>
        <fullName evidence="5">Zinc finger and SCAN domain-containing protein 5D pseudogene</fullName>
    </alternativeName>
</protein>
<keyword id="KW-0479">Metal-binding</keyword>
<keyword id="KW-0539">Nucleus</keyword>
<keyword id="KW-1185">Reference proteome</keyword>
<keyword id="KW-0677">Repeat</keyword>
<keyword id="KW-0804">Transcription</keyword>
<keyword id="KW-0805">Transcription regulation</keyword>
<keyword id="KW-0862">Zinc</keyword>
<keyword id="KW-0863">Zinc-finger</keyword>
<proteinExistence type="uncertain"/>
<feature type="chain" id="PRO_0000394247" description="Putative zinc finger and SCAN domain-containing protein 5D">
    <location>
        <begin position="1"/>
        <end position="497"/>
    </location>
</feature>
<feature type="domain" description="SCAN box" evidence="2">
    <location>
        <begin position="41"/>
        <end position="123"/>
    </location>
</feature>
<feature type="zinc finger region" description="C2H2-type 1" evidence="1">
    <location>
        <begin position="352"/>
        <end position="374"/>
    </location>
</feature>
<feature type="zinc finger region" description="C2H2-type 2" evidence="1">
    <location>
        <begin position="380"/>
        <end position="402"/>
    </location>
</feature>
<feature type="zinc finger region" description="C2H2-type 3" evidence="1">
    <location>
        <begin position="408"/>
        <end position="430"/>
    </location>
</feature>
<feature type="zinc finger region" description="C2H2-type 4" evidence="1">
    <location>
        <begin position="436"/>
        <end position="458"/>
    </location>
</feature>
<feature type="zinc finger region" description="C2H2-type 5" evidence="1">
    <location>
        <begin position="464"/>
        <end position="486"/>
    </location>
</feature>
<feature type="region of interest" description="Disordered" evidence="3">
    <location>
        <begin position="148"/>
        <end position="342"/>
    </location>
</feature>
<feature type="compositionally biased region" description="Polar residues" evidence="3">
    <location>
        <begin position="158"/>
        <end position="167"/>
    </location>
</feature>
<feature type="compositionally biased region" description="Basic and acidic residues" evidence="3">
    <location>
        <begin position="216"/>
        <end position="229"/>
    </location>
</feature>
<feature type="compositionally biased region" description="Basic and acidic residues" evidence="3">
    <location>
        <begin position="249"/>
        <end position="259"/>
    </location>
</feature>
<gene>
    <name evidence="5" type="primary">ZSCAN5DP</name>
    <name evidence="5" type="synonym">ZSCAN5D</name>
</gene>
<sequence>MGQCRNWKWGLESFDFSINRRSSAPGQLESASQMRESWRHKAGRRMFSCPEESDPIQALRKLTELCHLWLRPDLHTKEQILDMLVMEQFMISMPQELQVLVKVNGVQSCKDLEDLLRNNRRPKKWSVVNFLGKEYLMQESDVEMAEIPASVRDDPRGVSSQRASSVNEMRPGEGQASQELQTLPRVPALSRRQEEDFLLPETTVMKSAPKALRPKPTLEKDLNVDREENTGLTSPEPQLPNGPSVVGAKEGKEPKKRASVENVDADTPSACVVEREASTHSGSRGDALNLRCPKRSKPDATSISQEGPQGGATPVGNSESPGKPEINSVYSPGPAGAVSHPNGQEAKELLPFACGVCNKRFTCNSKLAIHMRSHTGERPFQCNFCERCFTQLSDLRVHQRIHTGEKPYTCDICHKRFNRMFSLKCHKRSHTGEKPYKCKDCNQVFTYRKNLNEHKLIHSGEKPYKCPKCLRAFRRPETLKYHQKTHQETTAPRECEG</sequence>
<reference key="1">
    <citation type="journal article" date="2004" name="Nature">
        <title>The DNA sequence and biology of human chromosome 19.</title>
        <authorList>
            <person name="Grimwood J."/>
            <person name="Gordon L.A."/>
            <person name="Olsen A.S."/>
            <person name="Terry A."/>
            <person name="Schmutz J."/>
            <person name="Lamerdin J.E."/>
            <person name="Hellsten U."/>
            <person name="Goodstein D."/>
            <person name="Couronne O."/>
            <person name="Tran-Gyamfi M."/>
            <person name="Aerts A."/>
            <person name="Altherr M."/>
            <person name="Ashworth L."/>
            <person name="Bajorek E."/>
            <person name="Black S."/>
            <person name="Branscomb E."/>
            <person name="Caenepeel S."/>
            <person name="Carrano A.V."/>
            <person name="Caoile C."/>
            <person name="Chan Y.M."/>
            <person name="Christensen M."/>
            <person name="Cleland C.A."/>
            <person name="Copeland A."/>
            <person name="Dalin E."/>
            <person name="Dehal P."/>
            <person name="Denys M."/>
            <person name="Detter J.C."/>
            <person name="Escobar J."/>
            <person name="Flowers D."/>
            <person name="Fotopulos D."/>
            <person name="Garcia C."/>
            <person name="Georgescu A.M."/>
            <person name="Glavina T."/>
            <person name="Gomez M."/>
            <person name="Gonzales E."/>
            <person name="Groza M."/>
            <person name="Hammon N."/>
            <person name="Hawkins T."/>
            <person name="Haydu L."/>
            <person name="Ho I."/>
            <person name="Huang W."/>
            <person name="Israni S."/>
            <person name="Jett J."/>
            <person name="Kadner K."/>
            <person name="Kimball H."/>
            <person name="Kobayashi A."/>
            <person name="Larionov V."/>
            <person name="Leem S.-H."/>
            <person name="Lopez F."/>
            <person name="Lou Y."/>
            <person name="Lowry S."/>
            <person name="Malfatti S."/>
            <person name="Martinez D."/>
            <person name="McCready P.M."/>
            <person name="Medina C."/>
            <person name="Morgan J."/>
            <person name="Nelson K."/>
            <person name="Nolan M."/>
            <person name="Ovcharenko I."/>
            <person name="Pitluck S."/>
            <person name="Pollard M."/>
            <person name="Popkie A.P."/>
            <person name="Predki P."/>
            <person name="Quan G."/>
            <person name="Ramirez L."/>
            <person name="Rash S."/>
            <person name="Retterer J."/>
            <person name="Rodriguez A."/>
            <person name="Rogers S."/>
            <person name="Salamov A."/>
            <person name="Salazar A."/>
            <person name="She X."/>
            <person name="Smith D."/>
            <person name="Slezak T."/>
            <person name="Solovyev V."/>
            <person name="Thayer N."/>
            <person name="Tice H."/>
            <person name="Tsai M."/>
            <person name="Ustaszewska A."/>
            <person name="Vo N."/>
            <person name="Wagner M."/>
            <person name="Wheeler J."/>
            <person name="Wu K."/>
            <person name="Xie G."/>
            <person name="Yang J."/>
            <person name="Dubchak I."/>
            <person name="Furey T.S."/>
            <person name="DeJong P."/>
            <person name="Dickson M."/>
            <person name="Gordon D."/>
            <person name="Eichler E.E."/>
            <person name="Pennacchio L.A."/>
            <person name="Richardson P."/>
            <person name="Stubbs L."/>
            <person name="Rokhsar D.S."/>
            <person name="Myers R.M."/>
            <person name="Rubin E.M."/>
            <person name="Lucas S.M."/>
        </authorList>
    </citation>
    <scope>NUCLEOTIDE SEQUENCE [LARGE SCALE GENOMIC DNA]</scope>
</reference>
<evidence type="ECO:0000255" key="1">
    <source>
        <dbReference type="PROSITE-ProRule" id="PRU00042"/>
    </source>
</evidence>
<evidence type="ECO:0000255" key="2">
    <source>
        <dbReference type="PROSITE-ProRule" id="PRU00187"/>
    </source>
</evidence>
<evidence type="ECO:0000256" key="3">
    <source>
        <dbReference type="SAM" id="MobiDB-lite"/>
    </source>
</evidence>
<evidence type="ECO:0000305" key="4"/>
<evidence type="ECO:0000312" key="5">
    <source>
        <dbReference type="HGNC" id="HGNC:37706"/>
    </source>
</evidence>
<accession>P0CG00</accession>
<name>ZSA5D_HUMAN</name>
<organism>
    <name type="scientific">Homo sapiens</name>
    <name type="common">Human</name>
    <dbReference type="NCBI Taxonomy" id="9606"/>
    <lineage>
        <taxon>Eukaryota</taxon>
        <taxon>Metazoa</taxon>
        <taxon>Chordata</taxon>
        <taxon>Craniata</taxon>
        <taxon>Vertebrata</taxon>
        <taxon>Euteleostomi</taxon>
        <taxon>Mammalia</taxon>
        <taxon>Eutheria</taxon>
        <taxon>Euarchontoglires</taxon>
        <taxon>Primates</taxon>
        <taxon>Haplorrhini</taxon>
        <taxon>Catarrhini</taxon>
        <taxon>Hominidae</taxon>
        <taxon>Homo</taxon>
    </lineage>
</organism>
<comment type="subcellular location">
    <subcellularLocation>
        <location evidence="2">Nucleus</location>
    </subcellularLocation>
</comment>
<comment type="caution">
    <text evidence="4">Could be the product of a pseudogene.</text>
</comment>